<organism>
    <name type="scientific">Elaeagnus umbellata</name>
    <name type="common">Autumn olive</name>
    <name type="synonym">Elaeagnus crispa</name>
    <dbReference type="NCBI Taxonomy" id="43233"/>
    <lineage>
        <taxon>Eukaryota</taxon>
        <taxon>Viridiplantae</taxon>
        <taxon>Streptophyta</taxon>
        <taxon>Embryophyta</taxon>
        <taxon>Tracheophyta</taxon>
        <taxon>Spermatophyta</taxon>
        <taxon>Magnoliopsida</taxon>
        <taxon>eudicotyledons</taxon>
        <taxon>Gunneridae</taxon>
        <taxon>Pentapetalae</taxon>
        <taxon>rosids</taxon>
        <taxon>fabids</taxon>
        <taxon>Rosales</taxon>
        <taxon>Elaeagnaceae</taxon>
        <taxon>Elaeagnus</taxon>
    </lineage>
</organism>
<name>METK2_ELAUM</name>
<comment type="function">
    <text evidence="5">Catalyzes the formation of S-adenosylmethionine from methionine and ATP. The reaction comprises two steps that are both catalyzed by the same enzyme: formation of S-adenosylmethionine (AdoMet) and triphosphate, and subsequent hydrolysis of the triphosphate.</text>
</comment>
<comment type="catalytic activity">
    <reaction evidence="5">
        <text>L-methionine + ATP + H2O = S-adenosyl-L-methionine + phosphate + diphosphate</text>
        <dbReference type="Rhea" id="RHEA:21080"/>
        <dbReference type="ChEBI" id="CHEBI:15377"/>
        <dbReference type="ChEBI" id="CHEBI:30616"/>
        <dbReference type="ChEBI" id="CHEBI:33019"/>
        <dbReference type="ChEBI" id="CHEBI:43474"/>
        <dbReference type="ChEBI" id="CHEBI:57844"/>
        <dbReference type="ChEBI" id="CHEBI:59789"/>
        <dbReference type="EC" id="2.5.1.6"/>
    </reaction>
</comment>
<comment type="cofactor">
    <cofactor evidence="5">
        <name>Mn(2+)</name>
        <dbReference type="ChEBI" id="CHEBI:29035"/>
    </cofactor>
    <cofactor evidence="5">
        <name>Mg(2+)</name>
        <dbReference type="ChEBI" id="CHEBI:18420"/>
    </cofactor>
    <cofactor evidence="5">
        <name>Co(2+)</name>
        <dbReference type="ChEBI" id="CHEBI:48828"/>
    </cofactor>
    <text evidence="3 5">Binds 2 divalent ions per subunit. The metal ions interact primarily with the substrate (By similarity). Can utilize magnesium, manganese or cobalt (in vitro) (By similarity).</text>
</comment>
<comment type="cofactor">
    <cofactor evidence="5">
        <name>K(+)</name>
        <dbReference type="ChEBI" id="CHEBI:29103"/>
    </cofactor>
    <text evidence="3">Binds 1 potassium ion per subunit. The potassium ion interacts primarily with the substrate (By similarity).</text>
</comment>
<comment type="pathway">
    <text evidence="5">Amino-acid biosynthesis; S-adenosyl-L-methionine biosynthesis; S-adenosyl-L-methionine from L-methionine: step 1/1.</text>
</comment>
<comment type="subunit">
    <text evidence="1">Homotetramer.</text>
</comment>
<comment type="subcellular location">
    <subcellularLocation>
        <location evidence="1">Cytoplasm</location>
    </subcellularLocation>
</comment>
<comment type="similarity">
    <text evidence="6">Belongs to the AdoMet synthase family.</text>
</comment>
<dbReference type="EC" id="2.5.1.6" evidence="5"/>
<dbReference type="EMBL" id="AF346306">
    <property type="protein sequence ID" value="AAK29410.1"/>
    <property type="molecule type" value="mRNA"/>
</dbReference>
<dbReference type="SMR" id="Q9AT55"/>
<dbReference type="UniPathway" id="UPA00315">
    <property type="reaction ID" value="UER00080"/>
</dbReference>
<dbReference type="GO" id="GO:0005737">
    <property type="term" value="C:cytoplasm"/>
    <property type="evidence" value="ECO:0007669"/>
    <property type="project" value="UniProtKB-SubCell"/>
</dbReference>
<dbReference type="GO" id="GO:0005524">
    <property type="term" value="F:ATP binding"/>
    <property type="evidence" value="ECO:0007669"/>
    <property type="project" value="UniProtKB-KW"/>
</dbReference>
<dbReference type="GO" id="GO:0046872">
    <property type="term" value="F:metal ion binding"/>
    <property type="evidence" value="ECO:0007669"/>
    <property type="project" value="UniProtKB-KW"/>
</dbReference>
<dbReference type="GO" id="GO:0004478">
    <property type="term" value="F:methionine adenosyltransferase activity"/>
    <property type="evidence" value="ECO:0007669"/>
    <property type="project" value="UniProtKB-EC"/>
</dbReference>
<dbReference type="GO" id="GO:0006730">
    <property type="term" value="P:one-carbon metabolic process"/>
    <property type="evidence" value="ECO:0007669"/>
    <property type="project" value="UniProtKB-KW"/>
</dbReference>
<dbReference type="GO" id="GO:0006556">
    <property type="term" value="P:S-adenosylmethionine biosynthetic process"/>
    <property type="evidence" value="ECO:0007669"/>
    <property type="project" value="UniProtKB-UniPathway"/>
</dbReference>
<dbReference type="CDD" id="cd18079">
    <property type="entry name" value="S-AdoMet_synt"/>
    <property type="match status" value="1"/>
</dbReference>
<dbReference type="FunFam" id="3.30.300.10:FF:000003">
    <property type="entry name" value="S-adenosylmethionine synthase"/>
    <property type="match status" value="1"/>
</dbReference>
<dbReference type="FunFam" id="3.30.300.10:FF:000004">
    <property type="entry name" value="S-adenosylmethionine synthase"/>
    <property type="match status" value="1"/>
</dbReference>
<dbReference type="FunFam" id="3.30.300.10:FF:000011">
    <property type="entry name" value="S-adenosylmethionine synthase"/>
    <property type="match status" value="1"/>
</dbReference>
<dbReference type="FunFam" id="3.30.300.10:FF:000021">
    <property type="entry name" value="S-adenosylmethionine synthetase 1"/>
    <property type="match status" value="1"/>
</dbReference>
<dbReference type="Gene3D" id="3.30.300.10">
    <property type="match status" value="3"/>
</dbReference>
<dbReference type="HAMAP" id="MF_00086">
    <property type="entry name" value="S_AdoMet_synth1"/>
    <property type="match status" value="1"/>
</dbReference>
<dbReference type="InterPro" id="IPR022631">
    <property type="entry name" value="ADOMET_SYNTHASE_CS"/>
</dbReference>
<dbReference type="InterPro" id="IPR022630">
    <property type="entry name" value="S-AdoMet_synt_C"/>
</dbReference>
<dbReference type="InterPro" id="IPR022629">
    <property type="entry name" value="S-AdoMet_synt_central"/>
</dbReference>
<dbReference type="InterPro" id="IPR022628">
    <property type="entry name" value="S-AdoMet_synt_N"/>
</dbReference>
<dbReference type="InterPro" id="IPR002133">
    <property type="entry name" value="S-AdoMet_synthetase"/>
</dbReference>
<dbReference type="InterPro" id="IPR022636">
    <property type="entry name" value="S-AdoMet_synthetase_sfam"/>
</dbReference>
<dbReference type="NCBIfam" id="TIGR01034">
    <property type="entry name" value="metK"/>
    <property type="match status" value="1"/>
</dbReference>
<dbReference type="PANTHER" id="PTHR11964">
    <property type="entry name" value="S-ADENOSYLMETHIONINE SYNTHETASE"/>
    <property type="match status" value="1"/>
</dbReference>
<dbReference type="Pfam" id="PF02773">
    <property type="entry name" value="S-AdoMet_synt_C"/>
    <property type="match status" value="1"/>
</dbReference>
<dbReference type="Pfam" id="PF02772">
    <property type="entry name" value="S-AdoMet_synt_M"/>
    <property type="match status" value="1"/>
</dbReference>
<dbReference type="Pfam" id="PF00438">
    <property type="entry name" value="S-AdoMet_synt_N"/>
    <property type="match status" value="1"/>
</dbReference>
<dbReference type="PIRSF" id="PIRSF000497">
    <property type="entry name" value="MAT"/>
    <property type="match status" value="1"/>
</dbReference>
<dbReference type="SUPFAM" id="SSF55973">
    <property type="entry name" value="S-adenosylmethionine synthetase"/>
    <property type="match status" value="3"/>
</dbReference>
<dbReference type="PROSITE" id="PS00376">
    <property type="entry name" value="ADOMET_SYNTHASE_1"/>
    <property type="match status" value="1"/>
</dbReference>
<dbReference type="PROSITE" id="PS00377">
    <property type="entry name" value="ADOMET_SYNTHASE_2"/>
    <property type="match status" value="1"/>
</dbReference>
<reference key="1">
    <citation type="submission" date="2001-02" db="EMBL/GenBank/DDBJ databases">
        <title>Structures and expression patterns of two cDNA clones encoding S-adenosyl-L-methionine synthetase from the root nodule of Elaeagnus umbellata.</title>
        <authorList>
            <person name="Lee S."/>
            <person name="An C."/>
        </authorList>
    </citation>
    <scope>NUCLEOTIDE SEQUENCE [MRNA]</scope>
    <source>
        <tissue>Root nodule</tissue>
    </source>
</reference>
<keyword id="KW-0067">ATP-binding</keyword>
<keyword id="KW-0170">Cobalt</keyword>
<keyword id="KW-0963">Cytoplasm</keyword>
<keyword id="KW-0460">Magnesium</keyword>
<keyword id="KW-0479">Metal-binding</keyword>
<keyword id="KW-0547">Nucleotide-binding</keyword>
<keyword id="KW-0554">One-carbon metabolism</keyword>
<keyword id="KW-0630">Potassium</keyword>
<keyword id="KW-0808">Transferase</keyword>
<proteinExistence type="evidence at transcript level"/>
<accession>Q9AT55</accession>
<sequence length="393" mass="43136">METFLFTSESVNEGHPDKLCDQISDAVLDACLAQDPDSKVACETCSKTNMVMVFGEITTKANVDYEKIVRDTCRTIGFVSDDVGLDADNCKVLVNIEQQSPDIAQGVHGHFTKRPEEIGAGDQGHMFGYATDETPELMPLSHVLATKLGARLTEVRKDGTCPWLRPDGKTQVTVEYYNDKGAMVPVRVHTVLISTQHDETVTNDEIAADLKEHVIKPVVPEKYLDEKTIFHLNPSGRFVIGGPHGDAGLTGRKIIIDTYGGWGAHGGGAFSGKDPTKVDRSGAYIVRQAAKSIVANGLARRCIVQVSYAIGVPDPLSVFVDSYGTGKIPDKEILKIVKENFDFRPGMITINLDLKRGGNDRFLKTAAYGHFGRDDPDFTWEIVKPLKWEKPQS</sequence>
<evidence type="ECO:0000250" key="1"/>
<evidence type="ECO:0000250" key="2">
    <source>
        <dbReference type="UniProtKB" id="P0A817"/>
    </source>
</evidence>
<evidence type="ECO:0000250" key="3">
    <source>
        <dbReference type="UniProtKB" id="P13444"/>
    </source>
</evidence>
<evidence type="ECO:0000250" key="4">
    <source>
        <dbReference type="UniProtKB" id="Q00266"/>
    </source>
</evidence>
<evidence type="ECO:0000250" key="5">
    <source>
        <dbReference type="UniProtKB" id="Q96551"/>
    </source>
</evidence>
<evidence type="ECO:0000305" key="6"/>
<feature type="chain" id="PRO_0000363023" description="S-adenosylmethionine synthase 2">
    <location>
        <begin position="1"/>
        <end position="393"/>
    </location>
</feature>
<feature type="binding site" evidence="3">
    <location>
        <position position="9"/>
    </location>
    <ligand>
        <name>Mg(2+)</name>
        <dbReference type="ChEBI" id="CHEBI:18420"/>
    </ligand>
</feature>
<feature type="binding site" description="in other chain" evidence="4">
    <location>
        <position position="15"/>
    </location>
    <ligand>
        <name>ATP</name>
        <dbReference type="ChEBI" id="CHEBI:30616"/>
        <note>ligand shared between two neighboring subunits</note>
    </ligand>
</feature>
<feature type="binding site" evidence="2">
    <location>
        <position position="43"/>
    </location>
    <ligand>
        <name>K(+)</name>
        <dbReference type="ChEBI" id="CHEBI:29103"/>
    </ligand>
</feature>
<feature type="binding site" description="in other chain" evidence="2">
    <location>
        <position position="56"/>
    </location>
    <ligand>
        <name>L-methionine</name>
        <dbReference type="ChEBI" id="CHEBI:57844"/>
        <note>ligand shared between two neighboring subunits</note>
    </ligand>
</feature>
<feature type="binding site" description="in other chain" evidence="2">
    <location>
        <position position="99"/>
    </location>
    <ligand>
        <name>L-methionine</name>
        <dbReference type="ChEBI" id="CHEBI:57844"/>
        <note>ligand shared between two neighboring subunits</note>
    </ligand>
</feature>
<feature type="binding site" description="in other chain" evidence="4">
    <location>
        <begin position="167"/>
        <end position="169"/>
    </location>
    <ligand>
        <name>ATP</name>
        <dbReference type="ChEBI" id="CHEBI:30616"/>
        <note>ligand shared between two neighboring subunits</note>
    </ligand>
</feature>
<feature type="binding site" description="in other chain" evidence="4">
    <location>
        <begin position="235"/>
        <end position="238"/>
    </location>
    <ligand>
        <name>ATP</name>
        <dbReference type="ChEBI" id="CHEBI:30616"/>
        <note>ligand shared between two neighboring subunits</note>
    </ligand>
</feature>
<feature type="binding site" description="in other chain" evidence="4">
    <location>
        <position position="246"/>
    </location>
    <ligand>
        <name>ATP</name>
        <dbReference type="ChEBI" id="CHEBI:30616"/>
        <note>ligand shared between two neighboring subunits</note>
    </ligand>
</feature>
<feature type="binding site" evidence="2">
    <location>
        <position position="246"/>
    </location>
    <ligand>
        <name>L-methionine</name>
        <dbReference type="ChEBI" id="CHEBI:57844"/>
        <note>ligand shared between two neighboring subunits</note>
    </ligand>
</feature>
<feature type="binding site" description="in other chain" evidence="2">
    <location>
        <begin position="252"/>
        <end position="253"/>
    </location>
    <ligand>
        <name>ATP</name>
        <dbReference type="ChEBI" id="CHEBI:30616"/>
        <note>ligand shared between two neighboring subunits</note>
    </ligand>
</feature>
<feature type="binding site" evidence="2">
    <location>
        <position position="269"/>
    </location>
    <ligand>
        <name>ATP</name>
        <dbReference type="ChEBI" id="CHEBI:30616"/>
        <note>ligand shared between two neighboring subunits</note>
    </ligand>
</feature>
<feature type="binding site" evidence="2">
    <location>
        <position position="273"/>
    </location>
    <ligand>
        <name>ATP</name>
        <dbReference type="ChEBI" id="CHEBI:30616"/>
        <note>ligand shared between two neighboring subunits</note>
    </ligand>
</feature>
<feature type="binding site" evidence="3">
    <location>
        <position position="277"/>
    </location>
    <ligand>
        <name>ATP</name>
        <dbReference type="ChEBI" id="CHEBI:30616"/>
        <note>ligand shared between two neighboring subunits</note>
    </ligand>
</feature>
<feature type="binding site" description="in other chain" evidence="2">
    <location>
        <position position="277"/>
    </location>
    <ligand>
        <name>L-methionine</name>
        <dbReference type="ChEBI" id="CHEBI:57844"/>
        <note>ligand shared between two neighboring subunits</note>
    </ligand>
</feature>
<gene>
    <name type="primary">SAMS2</name>
</gene>
<protein>
    <recommendedName>
        <fullName>S-adenosylmethionine synthase 2</fullName>
        <shortName>AdoMet synthase 2</shortName>
        <ecNumber evidence="5">2.5.1.6</ecNumber>
    </recommendedName>
    <alternativeName>
        <fullName>Methionine adenosyltransferase 2</fullName>
        <shortName>MAT 2</shortName>
    </alternativeName>
</protein>